<gene>
    <name evidence="1" type="primary">hutG</name>
    <name type="ordered locus">SAS2226</name>
</gene>
<organism>
    <name type="scientific">Staphylococcus aureus (strain MSSA476)</name>
    <dbReference type="NCBI Taxonomy" id="282459"/>
    <lineage>
        <taxon>Bacteria</taxon>
        <taxon>Bacillati</taxon>
        <taxon>Bacillota</taxon>
        <taxon>Bacilli</taxon>
        <taxon>Bacillales</taxon>
        <taxon>Staphylococcaceae</taxon>
        <taxon>Staphylococcus</taxon>
    </lineage>
</organism>
<keyword id="KW-0369">Histidine metabolism</keyword>
<keyword id="KW-0378">Hydrolase</keyword>
<keyword id="KW-0464">Manganese</keyword>
<keyword id="KW-0479">Metal-binding</keyword>
<reference key="1">
    <citation type="journal article" date="2004" name="Proc. Natl. Acad. Sci. U.S.A.">
        <title>Complete genomes of two clinical Staphylococcus aureus strains: evidence for the rapid evolution of virulence and drug resistance.</title>
        <authorList>
            <person name="Holden M.T.G."/>
            <person name="Feil E.J."/>
            <person name="Lindsay J.A."/>
            <person name="Peacock S.J."/>
            <person name="Day N.P.J."/>
            <person name="Enright M.C."/>
            <person name="Foster T.J."/>
            <person name="Moore C.E."/>
            <person name="Hurst L."/>
            <person name="Atkin R."/>
            <person name="Barron A."/>
            <person name="Bason N."/>
            <person name="Bentley S.D."/>
            <person name="Chillingworth C."/>
            <person name="Chillingworth T."/>
            <person name="Churcher C."/>
            <person name="Clark L."/>
            <person name="Corton C."/>
            <person name="Cronin A."/>
            <person name="Doggett J."/>
            <person name="Dowd L."/>
            <person name="Feltwell T."/>
            <person name="Hance Z."/>
            <person name="Harris B."/>
            <person name="Hauser H."/>
            <person name="Holroyd S."/>
            <person name="Jagels K."/>
            <person name="James K.D."/>
            <person name="Lennard N."/>
            <person name="Line A."/>
            <person name="Mayes R."/>
            <person name="Moule S."/>
            <person name="Mungall K."/>
            <person name="Ormond D."/>
            <person name="Quail M.A."/>
            <person name="Rabbinowitsch E."/>
            <person name="Rutherford K.M."/>
            <person name="Sanders M."/>
            <person name="Sharp S."/>
            <person name="Simmonds M."/>
            <person name="Stevens K."/>
            <person name="Whitehead S."/>
            <person name="Barrell B.G."/>
            <person name="Spratt B.G."/>
            <person name="Parkhill J."/>
        </authorList>
    </citation>
    <scope>NUCLEOTIDE SEQUENCE [LARGE SCALE GENOMIC DNA]</scope>
    <source>
        <strain>MSSA476</strain>
    </source>
</reference>
<dbReference type="EC" id="3.5.3.8" evidence="1"/>
<dbReference type="EMBL" id="BX571857">
    <property type="protein sequence ID" value="CAG44037.1"/>
    <property type="molecule type" value="Genomic_DNA"/>
</dbReference>
<dbReference type="RefSeq" id="WP_000277963.1">
    <property type="nucleotide sequence ID" value="NC_002953.3"/>
</dbReference>
<dbReference type="SMR" id="Q6G6Y7"/>
<dbReference type="KEGG" id="sas:SAS2226"/>
<dbReference type="HOGENOM" id="CLU_039478_2_0_9"/>
<dbReference type="UniPathway" id="UPA00379">
    <property type="reaction ID" value="UER00552"/>
</dbReference>
<dbReference type="GO" id="GO:0008783">
    <property type="term" value="F:agmatinase activity"/>
    <property type="evidence" value="ECO:0007669"/>
    <property type="project" value="TreeGrafter"/>
</dbReference>
<dbReference type="GO" id="GO:0050415">
    <property type="term" value="F:formimidoylglutamase activity"/>
    <property type="evidence" value="ECO:0007669"/>
    <property type="project" value="UniProtKB-UniRule"/>
</dbReference>
<dbReference type="GO" id="GO:0030145">
    <property type="term" value="F:manganese ion binding"/>
    <property type="evidence" value="ECO:0007669"/>
    <property type="project" value="UniProtKB-UniRule"/>
</dbReference>
<dbReference type="GO" id="GO:0019556">
    <property type="term" value="P:L-histidine catabolic process to glutamate and formamide"/>
    <property type="evidence" value="ECO:0007669"/>
    <property type="project" value="UniProtKB-UniPathway"/>
</dbReference>
<dbReference type="GO" id="GO:0019557">
    <property type="term" value="P:L-histidine catabolic process to glutamate and formate"/>
    <property type="evidence" value="ECO:0007669"/>
    <property type="project" value="UniProtKB-UniPathway"/>
</dbReference>
<dbReference type="GO" id="GO:0033389">
    <property type="term" value="P:putrescine biosynthetic process from arginine, via agmatine"/>
    <property type="evidence" value="ECO:0007669"/>
    <property type="project" value="TreeGrafter"/>
</dbReference>
<dbReference type="CDD" id="cd09988">
    <property type="entry name" value="Formimidoylglutamase"/>
    <property type="match status" value="1"/>
</dbReference>
<dbReference type="FunFam" id="3.40.800.10:FF:000015">
    <property type="entry name" value="Formimidoylglutamase"/>
    <property type="match status" value="1"/>
</dbReference>
<dbReference type="Gene3D" id="3.40.800.10">
    <property type="entry name" value="Ureohydrolase domain"/>
    <property type="match status" value="1"/>
</dbReference>
<dbReference type="HAMAP" id="MF_00737">
    <property type="entry name" value="Formimidoylglutam"/>
    <property type="match status" value="1"/>
</dbReference>
<dbReference type="InterPro" id="IPR005923">
    <property type="entry name" value="HutG"/>
</dbReference>
<dbReference type="InterPro" id="IPR006035">
    <property type="entry name" value="Ureohydrolase"/>
</dbReference>
<dbReference type="InterPro" id="IPR023696">
    <property type="entry name" value="Ureohydrolase_dom_sf"/>
</dbReference>
<dbReference type="NCBIfam" id="TIGR01227">
    <property type="entry name" value="hutG"/>
    <property type="match status" value="1"/>
</dbReference>
<dbReference type="PANTHER" id="PTHR11358">
    <property type="entry name" value="ARGINASE/AGMATINASE"/>
    <property type="match status" value="1"/>
</dbReference>
<dbReference type="PANTHER" id="PTHR11358:SF35">
    <property type="entry name" value="FORMIMIDOYLGLUTAMASE"/>
    <property type="match status" value="1"/>
</dbReference>
<dbReference type="Pfam" id="PF00491">
    <property type="entry name" value="Arginase"/>
    <property type="match status" value="1"/>
</dbReference>
<dbReference type="PIRSF" id="PIRSF036979">
    <property type="entry name" value="Arginase"/>
    <property type="match status" value="1"/>
</dbReference>
<dbReference type="SUPFAM" id="SSF52768">
    <property type="entry name" value="Arginase/deacetylase"/>
    <property type="match status" value="1"/>
</dbReference>
<dbReference type="PROSITE" id="PS51409">
    <property type="entry name" value="ARGINASE_2"/>
    <property type="match status" value="1"/>
</dbReference>
<name>HUTG_STAAS</name>
<feature type="chain" id="PRO_0000173770" description="Formimidoylglutamase">
    <location>
        <begin position="1"/>
        <end position="311"/>
    </location>
</feature>
<feature type="binding site" evidence="1">
    <location>
        <position position="130"/>
    </location>
    <ligand>
        <name>Mn(2+)</name>
        <dbReference type="ChEBI" id="CHEBI:29035"/>
        <label>1</label>
    </ligand>
</feature>
<feature type="binding site" evidence="1">
    <location>
        <position position="155"/>
    </location>
    <ligand>
        <name>Mn(2+)</name>
        <dbReference type="ChEBI" id="CHEBI:29035"/>
        <label>1</label>
    </ligand>
</feature>
<feature type="binding site" evidence="1">
    <location>
        <position position="155"/>
    </location>
    <ligand>
        <name>Mn(2+)</name>
        <dbReference type="ChEBI" id="CHEBI:29035"/>
        <label>2</label>
    </ligand>
</feature>
<feature type="binding site" evidence="1">
    <location>
        <position position="157"/>
    </location>
    <ligand>
        <name>Mn(2+)</name>
        <dbReference type="ChEBI" id="CHEBI:29035"/>
        <label>2</label>
    </ligand>
</feature>
<feature type="binding site" evidence="1">
    <location>
        <position position="159"/>
    </location>
    <ligand>
        <name>Mn(2+)</name>
        <dbReference type="ChEBI" id="CHEBI:29035"/>
        <label>1</label>
    </ligand>
</feature>
<feature type="binding site" evidence="1">
    <location>
        <position position="242"/>
    </location>
    <ligand>
        <name>Mn(2+)</name>
        <dbReference type="ChEBI" id="CHEBI:29035"/>
        <label>1</label>
    </ligand>
</feature>
<feature type="binding site" evidence="1">
    <location>
        <position position="242"/>
    </location>
    <ligand>
        <name>Mn(2+)</name>
        <dbReference type="ChEBI" id="CHEBI:29035"/>
        <label>2</label>
    </ligand>
</feature>
<feature type="binding site" evidence="1">
    <location>
        <position position="244"/>
    </location>
    <ligand>
        <name>Mn(2+)</name>
        <dbReference type="ChEBI" id="CHEBI:29035"/>
        <label>2</label>
    </ligand>
</feature>
<comment type="function">
    <text evidence="1">Catalyzes the conversion of N-formimidoyl-L-glutamate to L-glutamate and formamide.</text>
</comment>
<comment type="catalytic activity">
    <reaction evidence="1">
        <text>N-formimidoyl-L-glutamate + H2O = formamide + L-glutamate</text>
        <dbReference type="Rhea" id="RHEA:22492"/>
        <dbReference type="ChEBI" id="CHEBI:15377"/>
        <dbReference type="ChEBI" id="CHEBI:16397"/>
        <dbReference type="ChEBI" id="CHEBI:29985"/>
        <dbReference type="ChEBI" id="CHEBI:58928"/>
        <dbReference type="EC" id="3.5.3.8"/>
    </reaction>
</comment>
<comment type="cofactor">
    <cofactor evidence="1">
        <name>Mn(2+)</name>
        <dbReference type="ChEBI" id="CHEBI:29035"/>
    </cofactor>
    <text evidence="1">Binds 2 manganese ions per subunit.</text>
</comment>
<comment type="pathway">
    <text evidence="1">Amino-acid degradation; L-histidine degradation into L-glutamate; L-glutamate from N-formimidoyl-L-glutamate (hydrolase route): step 1/1.</text>
</comment>
<comment type="similarity">
    <text evidence="1">Belongs to the arginase family.</text>
</comment>
<accession>Q6G6Y7</accession>
<protein>
    <recommendedName>
        <fullName evidence="1">Formimidoylglutamase</fullName>
        <ecNumber evidence="1">3.5.3.8</ecNumber>
    </recommendedName>
    <alternativeName>
        <fullName evidence="1">Formiminoglutamase</fullName>
    </alternativeName>
    <alternativeName>
        <fullName evidence="1">Formiminoglutamate hydrolase</fullName>
    </alternativeName>
</protein>
<sequence length="311" mass="34523">MYKQGEPNLWTGRLDSETDPKKFRHFQTVTFEDLSKLEKSSMPSGVGILGYAVDKGVALNKGRIGAKEGPDAIKQAFAGLPDLNQCETLVDYGNVYHDHEELIDTQKEFAMLAAKSIANHRQTFLLGGGHDIAYAQYLATRKVYPTQSIGVINIDAHFDTRAEQESTSGTSFRQILEEDDNTDYLVLGIAQGGNTQSLFDYAKEKKIDYVFADELLNHVSPPIKDMIERFVHEHDVIMFTICMDVIDSAFAPGVSAPAVLGLYPHTVLELAKRIIPSDKVSSVSIAEMNPTYDADNRTAKLVANLVHHFLK</sequence>
<proteinExistence type="inferred from homology"/>
<evidence type="ECO:0000255" key="1">
    <source>
        <dbReference type="HAMAP-Rule" id="MF_00737"/>
    </source>
</evidence>